<feature type="chain" id="PRO_0000460442" description="CMP-5'-(3-aminopropyl)phosphonate synthase">
    <location>
        <begin position="1"/>
        <end position="628"/>
    </location>
</feature>
<feature type="region of interest" description="MobA-like NTP transferase" evidence="5">
    <location>
        <begin position="1"/>
        <end position="255"/>
    </location>
</feature>
<feature type="region of interest" description="Decarboxylase" evidence="5">
    <location>
        <begin position="278"/>
        <end position="628"/>
    </location>
</feature>
<feature type="modified residue" description="N6-(pyridoxal phosphate)lysine" evidence="1">
    <location>
        <position position="466"/>
    </location>
</feature>
<feature type="mutagenesis site" description="Strong decrease in nucleotide transferase activity." evidence="3">
    <original>K</original>
    <variation>A</variation>
    <location>
        <position position="37"/>
    </location>
</feature>
<feature type="mutagenesis site" description="Lack of decarboxylase activity, produces only CMP-5'-2APn." evidence="3">
    <original>K</original>
    <variation>A</variation>
    <location>
        <position position="466"/>
    </location>
</feature>
<sequence>MNENRTFATPDAVPVRAVVLAAGLGSRLGEPSSRRPKPLTPVAGRPILAHTLGHLAGVGVQEVVLVVGHLREAVRELAGGEYAGMKIHYVVNPDPSTTNNLRSVRLAREFLDQDVFLLEGDVVFEPAVLERLAAAPEASAVAASRPLRPLAGTVVRADADGVLTDYVDDRRQAGAFDHPGALKTANLYLLREAFLRERFLPALEELDRRLAGQGYYDYAVSDGLAAGGHAWRVADISDLAWYEVDDPGDQRQADFRFSPPREQQRILESLHGGYWRYGVTDHALLYNVHFPPAEMMEILRSDFDAVLRNYPSAHAPLTELAATIAARRPEEVVLANGSSEIIKILARLRGNWTVPVPGFNEYENVVGAERVHRYQLDAPDFRLPVEDYAAFVRRSGVDTAVVVSPNNPTSVGVPLADLRRLADLVGPDVLLVIDESFVDFAPAPIASIGPFLDRHRNVLLLKSISKVYGVGGIRLGYAATADTELARTLRAELPIWDINGFAEEFLRVLPHFRRAFADSCRQMRQNTLALAEGLAALPGIRVVPPDANFVFVELTGGIRAPELAHELFRRFRILTKECSGKSMPGGDAYLRVSSRSRAENEVVVAAVAEIVGGPRGAATTEGAGRADG</sequence>
<reference key="1">
    <citation type="journal article" date="2008" name="Chem. Biol.">
        <title>Cloning, expression, and biochemical characterization of Streptomyces rubellomurinus genes required for biosynthesis of antimalarial compound FR900098.</title>
        <authorList>
            <person name="Eliot A.C."/>
            <person name="Griffin B.M."/>
            <person name="Thomas P.M."/>
            <person name="Johannes T.W."/>
            <person name="Kelleher N.L."/>
            <person name="Zhao H."/>
            <person name="Metcalf W.W."/>
        </authorList>
    </citation>
    <scope>NUCLEOTIDE SEQUENCE [GENOMIC DNA]</scope>
    <scope>PATHWAY</scope>
    <source>
        <strain>ATCC 31215</strain>
    </source>
</reference>
<reference key="2">
    <citation type="submission" date="2015-02" db="EMBL/GenBank/DDBJ databases">
        <authorList>
            <person name="Ju K.-S."/>
            <person name="Doroghazi J.R."/>
            <person name="Metcalf W."/>
        </authorList>
    </citation>
    <scope>NUCLEOTIDE SEQUENCE [LARGE SCALE GENOMIC DNA]</scope>
    <source>
        <strain>ATCC 31215</strain>
    </source>
</reference>
<reference key="3">
    <citation type="journal article" date="2010" name="Chem. Biol.">
        <title>Deciphering the late biosynthetic steps of antimalarial compound FR-900098.</title>
        <authorList>
            <person name="Johannes T.W."/>
            <person name="DeSieno M.A."/>
            <person name="Griffin B.M."/>
            <person name="Thomas P.M."/>
            <person name="Kelleher N.L."/>
            <person name="Metcalf W.W."/>
            <person name="Zhao H."/>
        </authorList>
    </citation>
    <scope>FUNCTION</scope>
    <scope>CATALYTIC ACTIVITY</scope>
    <scope>COFACTOR</scope>
    <scope>PATHWAY</scope>
    <scope>MUTAGENESIS OF LYS-37 AND LYS-466</scope>
    <source>
        <strain>ATCC 31215</strain>
    </source>
</reference>
<proteinExistence type="evidence at protein level"/>
<dbReference type="EC" id="2.7.7.-" evidence="3"/>
<dbReference type="EC" id="4.1.1.-" evidence="3"/>
<dbReference type="EMBL" id="DQ267750">
    <property type="protein sequence ID" value="ABB90397.1"/>
    <property type="molecule type" value="Genomic_DNA"/>
</dbReference>
<dbReference type="EMBL" id="JZKH01000051">
    <property type="protein sequence ID" value="KJS60109.1"/>
    <property type="status" value="ALT_INIT"/>
    <property type="molecule type" value="Genomic_DNA"/>
</dbReference>
<dbReference type="RefSeq" id="WP_078860415.1">
    <property type="nucleotide sequence ID" value="NZ_JZKH01000051.1"/>
</dbReference>
<dbReference type="SMR" id="Q0ZQ41"/>
<dbReference type="PATRIC" id="fig|359131.3.peg.5653"/>
<dbReference type="OrthoDB" id="9788272at2"/>
<dbReference type="BioCyc" id="MetaCyc:MONOMER-18400"/>
<dbReference type="Proteomes" id="UP000033699">
    <property type="component" value="Unassembled WGS sequence"/>
</dbReference>
<dbReference type="GO" id="GO:0016831">
    <property type="term" value="F:carboxy-lyase activity"/>
    <property type="evidence" value="ECO:0007669"/>
    <property type="project" value="UniProtKB-KW"/>
</dbReference>
<dbReference type="GO" id="GO:0046872">
    <property type="term" value="F:metal ion binding"/>
    <property type="evidence" value="ECO:0007669"/>
    <property type="project" value="UniProtKB-KW"/>
</dbReference>
<dbReference type="GO" id="GO:0016779">
    <property type="term" value="F:nucleotidyltransferase activity"/>
    <property type="evidence" value="ECO:0007669"/>
    <property type="project" value="UniProtKB-KW"/>
</dbReference>
<dbReference type="GO" id="GO:0030170">
    <property type="term" value="F:pyridoxal phosphate binding"/>
    <property type="evidence" value="ECO:0007669"/>
    <property type="project" value="InterPro"/>
</dbReference>
<dbReference type="GO" id="GO:0017000">
    <property type="term" value="P:antibiotic biosynthetic process"/>
    <property type="evidence" value="ECO:0007669"/>
    <property type="project" value="UniProtKB-KW"/>
</dbReference>
<dbReference type="CDD" id="cd00609">
    <property type="entry name" value="AAT_like"/>
    <property type="match status" value="1"/>
</dbReference>
<dbReference type="CDD" id="cd02523">
    <property type="entry name" value="PC_cytidylyltransferase"/>
    <property type="match status" value="1"/>
</dbReference>
<dbReference type="Gene3D" id="3.90.1150.10">
    <property type="entry name" value="Aspartate Aminotransferase, domain 1"/>
    <property type="match status" value="1"/>
</dbReference>
<dbReference type="Gene3D" id="3.90.550.10">
    <property type="entry name" value="Spore Coat Polysaccharide Biosynthesis Protein SpsA, Chain A"/>
    <property type="match status" value="1"/>
</dbReference>
<dbReference type="Gene3D" id="3.40.640.10">
    <property type="entry name" value="Type I PLP-dependent aspartate aminotransferase-like (Major domain)"/>
    <property type="match status" value="1"/>
</dbReference>
<dbReference type="InterPro" id="IPR004839">
    <property type="entry name" value="Aminotransferase_I/II_large"/>
</dbReference>
<dbReference type="InterPro" id="IPR025877">
    <property type="entry name" value="MobA-like_NTP_Trfase"/>
</dbReference>
<dbReference type="InterPro" id="IPR004838">
    <property type="entry name" value="NHTrfase_class1_PyrdxlP-BS"/>
</dbReference>
<dbReference type="InterPro" id="IPR029044">
    <property type="entry name" value="Nucleotide-diphossugar_trans"/>
</dbReference>
<dbReference type="InterPro" id="IPR015424">
    <property type="entry name" value="PyrdxlP-dep_Trfase"/>
</dbReference>
<dbReference type="InterPro" id="IPR015421">
    <property type="entry name" value="PyrdxlP-dep_Trfase_major"/>
</dbReference>
<dbReference type="InterPro" id="IPR015422">
    <property type="entry name" value="PyrdxlP-dep_Trfase_small"/>
</dbReference>
<dbReference type="PANTHER" id="PTHR42885">
    <property type="entry name" value="HISTIDINOL-PHOSPHATE AMINOTRANSFERASE-RELATED"/>
    <property type="match status" value="1"/>
</dbReference>
<dbReference type="PANTHER" id="PTHR42885:SF1">
    <property type="entry name" value="THREONINE-PHOSPHATE DECARBOXYLASE"/>
    <property type="match status" value="1"/>
</dbReference>
<dbReference type="Pfam" id="PF00155">
    <property type="entry name" value="Aminotran_1_2"/>
    <property type="match status" value="1"/>
</dbReference>
<dbReference type="Pfam" id="PF12804">
    <property type="entry name" value="NTP_transf_3"/>
    <property type="match status" value="1"/>
</dbReference>
<dbReference type="SUPFAM" id="SSF53448">
    <property type="entry name" value="Nucleotide-diphospho-sugar transferases"/>
    <property type="match status" value="1"/>
</dbReference>
<dbReference type="SUPFAM" id="SSF53383">
    <property type="entry name" value="PLP-dependent transferases"/>
    <property type="match status" value="1"/>
</dbReference>
<dbReference type="PROSITE" id="PS00105">
    <property type="entry name" value="AA_TRANSFER_CLASS_1"/>
    <property type="match status" value="1"/>
</dbReference>
<evidence type="ECO:0000250" key="1">
    <source>
        <dbReference type="UniProtKB" id="P97084"/>
    </source>
</evidence>
<evidence type="ECO:0000269" key="2">
    <source>
    </source>
</evidence>
<evidence type="ECO:0000269" key="3">
    <source>
    </source>
</evidence>
<evidence type="ECO:0000303" key="4">
    <source>
    </source>
</evidence>
<evidence type="ECO:0000305" key="5"/>
<evidence type="ECO:0000312" key="6">
    <source>
        <dbReference type="EMBL" id="KJS60109.1"/>
    </source>
</evidence>
<name>FRBH_STRR3</name>
<organism>
    <name type="scientific">Streptomyces rubellomurinus (strain ATCC 31215)</name>
    <dbReference type="NCBI Taxonomy" id="359131"/>
    <lineage>
        <taxon>Bacteria</taxon>
        <taxon>Bacillati</taxon>
        <taxon>Actinomycetota</taxon>
        <taxon>Actinomycetes</taxon>
        <taxon>Kitasatosporales</taxon>
        <taxon>Streptomycetaceae</taxon>
        <taxon>Streptomyces</taxon>
    </lineage>
</organism>
<keyword id="KW-0045">Antibiotic biosynthesis</keyword>
<keyword id="KW-0210">Decarboxylase</keyword>
<keyword id="KW-0456">Lyase</keyword>
<keyword id="KW-0460">Magnesium</keyword>
<keyword id="KW-0479">Metal-binding</keyword>
<keyword id="KW-0511">Multifunctional enzyme</keyword>
<keyword id="KW-0548">Nucleotidyltransferase</keyword>
<keyword id="KW-0663">Pyridoxal phosphate</keyword>
<keyword id="KW-1185">Reference proteome</keyword>
<keyword id="KW-0808">Transferase</keyword>
<accession>Q0ZQ41</accession>
<accession>A0A0F2TA73</accession>
<protein>
    <recommendedName>
        <fullName evidence="5">CMP-5'-(3-aminopropyl)phosphonate synthase</fullName>
    </recommendedName>
    <domain>
        <recommendedName>
            <fullName evidence="5">2-amino-4-phosphonobutanoate cytidylyltransferase</fullName>
            <ecNumber evidence="3">2.7.7.-</ecNumber>
        </recommendedName>
    </domain>
    <domain>
        <recommendedName>
            <fullName evidence="5">CMP-5'-(3-amino-3-carboxypropyl)phosphonate decarboxylase</fullName>
            <ecNumber evidence="3">4.1.1.-</ecNumber>
        </recommendedName>
    </domain>
</protein>
<gene>
    <name evidence="4" type="primary">frbH</name>
    <name evidence="6" type="ORF">VM95_23230</name>
</gene>
<comment type="function">
    <text evidence="3">Bifunctional cytidylyltransferase/decarboxylase involved in the biosynthesis of the phosphonate antibiotic FR-900098, a potent antimalarial agent that acts as an inhibitor of 1-deoxy-D-xylulose 5-phosphate reductoisomerase (DXR), the first enzyme in the nonmevalonate pathway for isoprenoid biosynthesis (PubMed:20142041). Catalyzes the condensation of 2-amino-4-phosphonobutyrate (2APn) and CTP to form CMP-5'-2APn and then decarboxylates CMP-5'-2APn to yield CMP-5'-(3-aminopropyl)phosphonate (CMP-5'-3APn) (PubMed:20142041).</text>
</comment>
<comment type="catalytic activity">
    <reaction evidence="3">
        <text>2-amino-4-phosphonobutanoate + CTP = CMP-5'-(3-amino-3-carboxypropyl)phosphonate + diphosphate</text>
        <dbReference type="Rhea" id="RHEA:78483"/>
        <dbReference type="ChEBI" id="CHEBI:33019"/>
        <dbReference type="ChEBI" id="CHEBI:37563"/>
        <dbReference type="ChEBI" id="CHEBI:229205"/>
        <dbReference type="ChEBI" id="CHEBI:229214"/>
    </reaction>
    <physiologicalReaction direction="left-to-right" evidence="3">
        <dbReference type="Rhea" id="RHEA:78484"/>
    </physiologicalReaction>
</comment>
<comment type="catalytic activity">
    <reaction evidence="3">
        <text>CMP-5'-(3-amino-3-carboxypropyl)phosphonate + H(+) = CMP-5'-(3-aminopropyl)phosphonate + CO2</text>
        <dbReference type="Rhea" id="RHEA:78487"/>
        <dbReference type="ChEBI" id="CHEBI:15378"/>
        <dbReference type="ChEBI" id="CHEBI:16526"/>
        <dbReference type="ChEBI" id="CHEBI:229206"/>
        <dbReference type="ChEBI" id="CHEBI:229214"/>
    </reaction>
    <physiologicalReaction direction="left-to-right" evidence="3">
        <dbReference type="Rhea" id="RHEA:78488"/>
    </physiologicalReaction>
</comment>
<comment type="cofactor">
    <cofactor evidence="3">
        <name>Mg(2+)</name>
        <dbReference type="ChEBI" id="CHEBI:18420"/>
    </cofactor>
</comment>
<comment type="cofactor">
    <cofactor evidence="1">
        <name>pyridoxal 5'-phosphate</name>
        <dbReference type="ChEBI" id="CHEBI:597326"/>
    </cofactor>
</comment>
<comment type="pathway">
    <text evidence="2 3">Antibiotic biosynthesis.</text>
</comment>
<comment type="similarity">
    <text evidence="5">In the N-terminal section; belongs to the MobA family.</text>
</comment>
<comment type="similarity">
    <text evidence="5">In the C-terminal section; belongs to the class-I pyridoxal-phosphate-dependent aminotransferase family.</text>
</comment>
<comment type="sequence caution" evidence="5">
    <conflict type="erroneous initiation">
        <sequence resource="EMBL-CDS" id="KJS60109"/>
    </conflict>
    <text>Truncated N-terminus.</text>
</comment>